<proteinExistence type="inferred from homology"/>
<name>COAE_IDILO</name>
<accession>Q5R0N3</accession>
<reference key="1">
    <citation type="journal article" date="2004" name="Proc. Natl. Acad. Sci. U.S.A.">
        <title>Genome sequence of the deep-sea gamma-proteobacterium Idiomarina loihiensis reveals amino acid fermentation as a source of carbon and energy.</title>
        <authorList>
            <person name="Hou S."/>
            <person name="Saw J.H."/>
            <person name="Lee K.S."/>
            <person name="Freitas T.A."/>
            <person name="Belisle C."/>
            <person name="Kawarabayasi Y."/>
            <person name="Donachie S.P."/>
            <person name="Pikina A."/>
            <person name="Galperin M.Y."/>
            <person name="Koonin E.V."/>
            <person name="Makarova K.S."/>
            <person name="Omelchenko M.V."/>
            <person name="Sorokin A."/>
            <person name="Wolf Y.I."/>
            <person name="Li Q.X."/>
            <person name="Keum Y.S."/>
            <person name="Campbell S."/>
            <person name="Denery J."/>
            <person name="Aizawa S."/>
            <person name="Shibata S."/>
            <person name="Malahoff A."/>
            <person name="Alam M."/>
        </authorList>
    </citation>
    <scope>NUCLEOTIDE SEQUENCE [LARGE SCALE GENOMIC DNA]</scope>
    <source>
        <strain>ATCC BAA-735 / DSM 15497 / L2-TR</strain>
    </source>
</reference>
<protein>
    <recommendedName>
        <fullName evidence="1">Dephospho-CoA kinase</fullName>
        <ecNumber evidence="1">2.7.1.24</ecNumber>
    </recommendedName>
    <alternativeName>
        <fullName evidence="1">Dephosphocoenzyme A kinase</fullName>
    </alternativeName>
</protein>
<gene>
    <name evidence="1" type="primary">coaE</name>
    <name type="ordered locus">IL0449</name>
</gene>
<comment type="function">
    <text evidence="1">Catalyzes the phosphorylation of the 3'-hydroxyl group of dephosphocoenzyme A to form coenzyme A.</text>
</comment>
<comment type="catalytic activity">
    <reaction evidence="1">
        <text>3'-dephospho-CoA + ATP = ADP + CoA + H(+)</text>
        <dbReference type="Rhea" id="RHEA:18245"/>
        <dbReference type="ChEBI" id="CHEBI:15378"/>
        <dbReference type="ChEBI" id="CHEBI:30616"/>
        <dbReference type="ChEBI" id="CHEBI:57287"/>
        <dbReference type="ChEBI" id="CHEBI:57328"/>
        <dbReference type="ChEBI" id="CHEBI:456216"/>
        <dbReference type="EC" id="2.7.1.24"/>
    </reaction>
</comment>
<comment type="pathway">
    <text evidence="1">Cofactor biosynthesis; coenzyme A biosynthesis; CoA from (R)-pantothenate: step 5/5.</text>
</comment>
<comment type="subcellular location">
    <subcellularLocation>
        <location evidence="1">Cytoplasm</location>
    </subcellularLocation>
</comment>
<comment type="similarity">
    <text evidence="1">Belongs to the CoaE family.</text>
</comment>
<evidence type="ECO:0000255" key="1">
    <source>
        <dbReference type="HAMAP-Rule" id="MF_00376"/>
    </source>
</evidence>
<keyword id="KW-0067">ATP-binding</keyword>
<keyword id="KW-0173">Coenzyme A biosynthesis</keyword>
<keyword id="KW-0963">Cytoplasm</keyword>
<keyword id="KW-0418">Kinase</keyword>
<keyword id="KW-0547">Nucleotide-binding</keyword>
<keyword id="KW-1185">Reference proteome</keyword>
<keyword id="KW-0808">Transferase</keyword>
<organism>
    <name type="scientific">Idiomarina loihiensis (strain ATCC BAA-735 / DSM 15497 / L2-TR)</name>
    <dbReference type="NCBI Taxonomy" id="283942"/>
    <lineage>
        <taxon>Bacteria</taxon>
        <taxon>Pseudomonadati</taxon>
        <taxon>Pseudomonadota</taxon>
        <taxon>Gammaproteobacteria</taxon>
        <taxon>Alteromonadales</taxon>
        <taxon>Idiomarinaceae</taxon>
        <taxon>Idiomarina</taxon>
    </lineage>
</organism>
<dbReference type="EC" id="2.7.1.24" evidence="1"/>
<dbReference type="EMBL" id="AE017340">
    <property type="protein sequence ID" value="AAV81292.1"/>
    <property type="molecule type" value="Genomic_DNA"/>
</dbReference>
<dbReference type="RefSeq" id="WP_011233710.1">
    <property type="nucleotide sequence ID" value="NC_006512.1"/>
</dbReference>
<dbReference type="SMR" id="Q5R0N3"/>
<dbReference type="STRING" id="283942.IL0449"/>
<dbReference type="GeneID" id="41335601"/>
<dbReference type="KEGG" id="ilo:IL0449"/>
<dbReference type="eggNOG" id="COG0237">
    <property type="taxonomic scope" value="Bacteria"/>
</dbReference>
<dbReference type="HOGENOM" id="CLU_057180_1_2_6"/>
<dbReference type="OrthoDB" id="9812943at2"/>
<dbReference type="UniPathway" id="UPA00241">
    <property type="reaction ID" value="UER00356"/>
</dbReference>
<dbReference type="Proteomes" id="UP000001171">
    <property type="component" value="Chromosome"/>
</dbReference>
<dbReference type="GO" id="GO:0005737">
    <property type="term" value="C:cytoplasm"/>
    <property type="evidence" value="ECO:0007669"/>
    <property type="project" value="UniProtKB-SubCell"/>
</dbReference>
<dbReference type="GO" id="GO:0005524">
    <property type="term" value="F:ATP binding"/>
    <property type="evidence" value="ECO:0007669"/>
    <property type="project" value="UniProtKB-UniRule"/>
</dbReference>
<dbReference type="GO" id="GO:0004140">
    <property type="term" value="F:dephospho-CoA kinase activity"/>
    <property type="evidence" value="ECO:0007669"/>
    <property type="project" value="UniProtKB-UniRule"/>
</dbReference>
<dbReference type="GO" id="GO:0015937">
    <property type="term" value="P:coenzyme A biosynthetic process"/>
    <property type="evidence" value="ECO:0007669"/>
    <property type="project" value="UniProtKB-UniRule"/>
</dbReference>
<dbReference type="CDD" id="cd02022">
    <property type="entry name" value="DPCK"/>
    <property type="match status" value="1"/>
</dbReference>
<dbReference type="Gene3D" id="3.40.50.300">
    <property type="entry name" value="P-loop containing nucleotide triphosphate hydrolases"/>
    <property type="match status" value="1"/>
</dbReference>
<dbReference type="HAMAP" id="MF_00376">
    <property type="entry name" value="Dephospho_CoA_kinase"/>
    <property type="match status" value="1"/>
</dbReference>
<dbReference type="InterPro" id="IPR001977">
    <property type="entry name" value="Depp_CoAkinase"/>
</dbReference>
<dbReference type="InterPro" id="IPR027417">
    <property type="entry name" value="P-loop_NTPase"/>
</dbReference>
<dbReference type="NCBIfam" id="TIGR00152">
    <property type="entry name" value="dephospho-CoA kinase"/>
    <property type="match status" value="1"/>
</dbReference>
<dbReference type="PANTHER" id="PTHR10695:SF46">
    <property type="entry name" value="BIFUNCTIONAL COENZYME A SYNTHASE-RELATED"/>
    <property type="match status" value="1"/>
</dbReference>
<dbReference type="PANTHER" id="PTHR10695">
    <property type="entry name" value="DEPHOSPHO-COA KINASE-RELATED"/>
    <property type="match status" value="1"/>
</dbReference>
<dbReference type="Pfam" id="PF01121">
    <property type="entry name" value="CoaE"/>
    <property type="match status" value="1"/>
</dbReference>
<dbReference type="SUPFAM" id="SSF52540">
    <property type="entry name" value="P-loop containing nucleoside triphosphate hydrolases"/>
    <property type="match status" value="1"/>
</dbReference>
<dbReference type="PROSITE" id="PS51219">
    <property type="entry name" value="DPCK"/>
    <property type="match status" value="1"/>
</dbReference>
<feature type="chain" id="PRO_0000243296" description="Dephospho-CoA kinase">
    <location>
        <begin position="1"/>
        <end position="202"/>
    </location>
</feature>
<feature type="domain" description="DPCK" evidence="1">
    <location>
        <begin position="4"/>
        <end position="200"/>
    </location>
</feature>
<feature type="binding site" evidence="1">
    <location>
        <begin position="12"/>
        <end position="17"/>
    </location>
    <ligand>
        <name>ATP</name>
        <dbReference type="ChEBI" id="CHEBI:30616"/>
    </ligand>
</feature>
<sequence length="202" mass="22659">MTYVVGVTGGIGSGKSAATAEFEKLGITVIDADIVSRQVVMPGTPCLRAIAEHFGRDLLTDKGELDRKALRQKVFSDPAEKDWLNSLLHPAIREEILTQLEQASSPYVILSAPLLLENNLDKYCQRVLVVDVPEELQLQRTIQRDESPKEEVEAIMKAQLSRKARLRKADDILNNESSIDQLRRQVNQLHQRYLAATVAQEE</sequence>